<reference key="1">
    <citation type="journal article" date="2005" name="Nat. Biotechnol.">
        <title>Complete genome sequence of the plant commensal Pseudomonas fluorescens Pf-5.</title>
        <authorList>
            <person name="Paulsen I.T."/>
            <person name="Press C.M."/>
            <person name="Ravel J."/>
            <person name="Kobayashi D.Y."/>
            <person name="Myers G.S.A."/>
            <person name="Mavrodi D.V."/>
            <person name="DeBoy R.T."/>
            <person name="Seshadri R."/>
            <person name="Ren Q."/>
            <person name="Madupu R."/>
            <person name="Dodson R.J."/>
            <person name="Durkin A.S."/>
            <person name="Brinkac L.M."/>
            <person name="Daugherty S.C."/>
            <person name="Sullivan S.A."/>
            <person name="Rosovitz M.J."/>
            <person name="Gwinn M.L."/>
            <person name="Zhou L."/>
            <person name="Schneider D.J."/>
            <person name="Cartinhour S.W."/>
            <person name="Nelson W.C."/>
            <person name="Weidman J."/>
            <person name="Watkins K."/>
            <person name="Tran K."/>
            <person name="Khouri H."/>
            <person name="Pierson E.A."/>
            <person name="Pierson L.S. III"/>
            <person name="Thomashow L.S."/>
            <person name="Loper J.E."/>
        </authorList>
    </citation>
    <scope>NUCLEOTIDE SEQUENCE [LARGE SCALE GENOMIC DNA]</scope>
    <source>
        <strain>ATCC BAA-477 / NRRL B-23932 / Pf-5</strain>
    </source>
</reference>
<dbReference type="EC" id="2.3.1.47" evidence="1"/>
<dbReference type="EMBL" id="CP000076">
    <property type="protein sequence ID" value="AAY94882.1"/>
    <property type="molecule type" value="Genomic_DNA"/>
</dbReference>
<dbReference type="RefSeq" id="WP_011063867.1">
    <property type="nucleotide sequence ID" value="NC_004129.6"/>
</dbReference>
<dbReference type="SMR" id="Q4K4T3"/>
<dbReference type="STRING" id="220664.PFL_5692"/>
<dbReference type="GeneID" id="57478642"/>
<dbReference type="KEGG" id="pfl:PFL_5692"/>
<dbReference type="PATRIC" id="fig|220664.5.peg.5803"/>
<dbReference type="eggNOG" id="COG0156">
    <property type="taxonomic scope" value="Bacteria"/>
</dbReference>
<dbReference type="HOGENOM" id="CLU_015846_11_2_6"/>
<dbReference type="UniPathway" id="UPA00078"/>
<dbReference type="Proteomes" id="UP000008540">
    <property type="component" value="Chromosome"/>
</dbReference>
<dbReference type="GO" id="GO:0008710">
    <property type="term" value="F:8-amino-7-oxononanoate synthase activity"/>
    <property type="evidence" value="ECO:0007669"/>
    <property type="project" value="UniProtKB-UniRule"/>
</dbReference>
<dbReference type="GO" id="GO:0030170">
    <property type="term" value="F:pyridoxal phosphate binding"/>
    <property type="evidence" value="ECO:0007669"/>
    <property type="project" value="UniProtKB-UniRule"/>
</dbReference>
<dbReference type="GO" id="GO:0009102">
    <property type="term" value="P:biotin biosynthetic process"/>
    <property type="evidence" value="ECO:0007669"/>
    <property type="project" value="UniProtKB-UniRule"/>
</dbReference>
<dbReference type="CDD" id="cd06454">
    <property type="entry name" value="KBL_like"/>
    <property type="match status" value="1"/>
</dbReference>
<dbReference type="Gene3D" id="3.90.1150.10">
    <property type="entry name" value="Aspartate Aminotransferase, domain 1"/>
    <property type="match status" value="1"/>
</dbReference>
<dbReference type="Gene3D" id="3.40.640.10">
    <property type="entry name" value="Type I PLP-dependent aspartate aminotransferase-like (Major domain)"/>
    <property type="match status" value="1"/>
</dbReference>
<dbReference type="HAMAP" id="MF_01693">
    <property type="entry name" value="BioF_aminotrans_2"/>
    <property type="match status" value="1"/>
</dbReference>
<dbReference type="InterPro" id="IPR001917">
    <property type="entry name" value="Aminotrans_II_pyridoxalP_BS"/>
</dbReference>
<dbReference type="InterPro" id="IPR004839">
    <property type="entry name" value="Aminotransferase_I/II_large"/>
</dbReference>
<dbReference type="InterPro" id="IPR050087">
    <property type="entry name" value="AON_synthase_class-II"/>
</dbReference>
<dbReference type="InterPro" id="IPR004723">
    <property type="entry name" value="AONS_Archaea/Proteobacteria"/>
</dbReference>
<dbReference type="InterPro" id="IPR022834">
    <property type="entry name" value="AONS_Proteobacteria"/>
</dbReference>
<dbReference type="InterPro" id="IPR015424">
    <property type="entry name" value="PyrdxlP-dep_Trfase"/>
</dbReference>
<dbReference type="InterPro" id="IPR015421">
    <property type="entry name" value="PyrdxlP-dep_Trfase_major"/>
</dbReference>
<dbReference type="InterPro" id="IPR015422">
    <property type="entry name" value="PyrdxlP-dep_Trfase_small"/>
</dbReference>
<dbReference type="NCBIfam" id="TIGR00858">
    <property type="entry name" value="bioF"/>
    <property type="match status" value="1"/>
</dbReference>
<dbReference type="PANTHER" id="PTHR13693:SF100">
    <property type="entry name" value="8-AMINO-7-OXONONANOATE SYNTHASE"/>
    <property type="match status" value="1"/>
</dbReference>
<dbReference type="PANTHER" id="PTHR13693">
    <property type="entry name" value="CLASS II AMINOTRANSFERASE/8-AMINO-7-OXONONANOATE SYNTHASE"/>
    <property type="match status" value="1"/>
</dbReference>
<dbReference type="Pfam" id="PF00155">
    <property type="entry name" value="Aminotran_1_2"/>
    <property type="match status" value="1"/>
</dbReference>
<dbReference type="SUPFAM" id="SSF53383">
    <property type="entry name" value="PLP-dependent transferases"/>
    <property type="match status" value="1"/>
</dbReference>
<dbReference type="PROSITE" id="PS00599">
    <property type="entry name" value="AA_TRANSFER_CLASS_2"/>
    <property type="match status" value="1"/>
</dbReference>
<accession>Q4K4T3</accession>
<sequence length="392" mass="41903">MSFDLAARLAARRAEHLYRQRPLLQSPQGPQVVVDGQPLLAFCNNDYLGLANHPQVIEAWRSGASRWGVGGGASHLVIGHSTPHHALEEALAELTGRPRALLFTTGYMANLGAVTALVGQGDTVLEDRLNHASLLDAGLLSGARFNRYLHNDAHSLAKRLEKATGNTLVVTDGVFSMDGDVADLPALARATKARGAWLMVDDAHGFGPLGANGGGLVEHFGLGLDEVPVLVGTLGKAFGTAGAFVAGSEDLIESLIQFARPYIYTTSQPPALACATLKSLELLRSEHWRREHLAALIRQFRQGAEQIGLQLMDSFTPIQPILVGDSARAVRLSQMLRERGIMVSAIRPPTVPAGSARLRVTLSAAHSEAQVQLLLSALADCFRELQAEPSHA</sequence>
<organism>
    <name type="scientific">Pseudomonas fluorescens (strain ATCC BAA-477 / NRRL B-23932 / Pf-5)</name>
    <dbReference type="NCBI Taxonomy" id="220664"/>
    <lineage>
        <taxon>Bacteria</taxon>
        <taxon>Pseudomonadati</taxon>
        <taxon>Pseudomonadota</taxon>
        <taxon>Gammaproteobacteria</taxon>
        <taxon>Pseudomonadales</taxon>
        <taxon>Pseudomonadaceae</taxon>
        <taxon>Pseudomonas</taxon>
    </lineage>
</organism>
<protein>
    <recommendedName>
        <fullName evidence="1">8-amino-7-oxononanoate synthase</fullName>
        <shortName evidence="1">AONS</shortName>
        <ecNumber evidence="1">2.3.1.47</ecNumber>
    </recommendedName>
    <alternativeName>
        <fullName evidence="1">7-keto-8-amino-pelargonic acid synthase</fullName>
        <shortName evidence="1">7-KAP synthase</shortName>
        <shortName evidence="1">KAPA synthase</shortName>
    </alternativeName>
    <alternativeName>
        <fullName evidence="1">8-amino-7-ketopelargonate synthase</fullName>
    </alternativeName>
</protein>
<evidence type="ECO:0000255" key="1">
    <source>
        <dbReference type="HAMAP-Rule" id="MF_01693"/>
    </source>
</evidence>
<comment type="function">
    <text evidence="1">Catalyzes the decarboxylative condensation of pimeloyl-[acyl-carrier protein] and L-alanine to produce 8-amino-7-oxononanoate (AON), [acyl-carrier protein], and carbon dioxide.</text>
</comment>
<comment type="catalytic activity">
    <reaction evidence="1">
        <text>6-carboxyhexanoyl-[ACP] + L-alanine + H(+) = (8S)-8-amino-7-oxononanoate + holo-[ACP] + CO2</text>
        <dbReference type="Rhea" id="RHEA:42288"/>
        <dbReference type="Rhea" id="RHEA-COMP:9685"/>
        <dbReference type="Rhea" id="RHEA-COMP:9955"/>
        <dbReference type="ChEBI" id="CHEBI:15378"/>
        <dbReference type="ChEBI" id="CHEBI:16526"/>
        <dbReference type="ChEBI" id="CHEBI:57972"/>
        <dbReference type="ChEBI" id="CHEBI:64479"/>
        <dbReference type="ChEBI" id="CHEBI:78846"/>
        <dbReference type="ChEBI" id="CHEBI:149468"/>
        <dbReference type="EC" id="2.3.1.47"/>
    </reaction>
</comment>
<comment type="cofactor">
    <cofactor evidence="1">
        <name>pyridoxal 5'-phosphate</name>
        <dbReference type="ChEBI" id="CHEBI:597326"/>
    </cofactor>
</comment>
<comment type="pathway">
    <text evidence="1">Cofactor biosynthesis; biotin biosynthesis.</text>
</comment>
<comment type="subunit">
    <text evidence="1">Homodimer.</text>
</comment>
<comment type="similarity">
    <text evidence="1">Belongs to the class-II pyridoxal-phosphate-dependent aminotransferase family. BioF subfamily.</text>
</comment>
<gene>
    <name evidence="1" type="primary">bioF</name>
    <name type="ordered locus">PFL_5692</name>
</gene>
<proteinExistence type="inferred from homology"/>
<feature type="chain" id="PRO_0000381076" description="8-amino-7-oxononanoate synthase">
    <location>
        <begin position="1"/>
        <end position="392"/>
    </location>
</feature>
<feature type="binding site" evidence="1">
    <location>
        <position position="19"/>
    </location>
    <ligand>
        <name>substrate</name>
    </ligand>
</feature>
<feature type="binding site" evidence="1">
    <location>
        <begin position="106"/>
        <end position="107"/>
    </location>
    <ligand>
        <name>pyridoxal 5'-phosphate</name>
        <dbReference type="ChEBI" id="CHEBI:597326"/>
    </ligand>
</feature>
<feature type="binding site" evidence="1">
    <location>
        <position position="131"/>
    </location>
    <ligand>
        <name>substrate</name>
    </ligand>
</feature>
<feature type="binding site" evidence="1">
    <location>
        <position position="176"/>
    </location>
    <ligand>
        <name>pyridoxal 5'-phosphate</name>
        <dbReference type="ChEBI" id="CHEBI:597326"/>
    </ligand>
</feature>
<feature type="binding site" evidence="1">
    <location>
        <position position="204"/>
    </location>
    <ligand>
        <name>pyridoxal 5'-phosphate</name>
        <dbReference type="ChEBI" id="CHEBI:597326"/>
    </ligand>
</feature>
<feature type="binding site" evidence="1">
    <location>
        <position position="233"/>
    </location>
    <ligand>
        <name>pyridoxal 5'-phosphate</name>
        <dbReference type="ChEBI" id="CHEBI:597326"/>
    </ligand>
</feature>
<feature type="binding site" evidence="1">
    <location>
        <position position="350"/>
    </location>
    <ligand>
        <name>substrate</name>
    </ligand>
</feature>
<feature type="modified residue" description="N6-(pyridoxal phosphate)lysine" evidence="1">
    <location>
        <position position="236"/>
    </location>
</feature>
<name>BIOF_PSEF5</name>
<keyword id="KW-0093">Biotin biosynthesis</keyword>
<keyword id="KW-0663">Pyridoxal phosphate</keyword>
<keyword id="KW-0808">Transferase</keyword>